<name>RL3_BURA4</name>
<gene>
    <name evidence="1" type="primary">rplC</name>
    <name type="ordered locus">BamMC406_0276</name>
</gene>
<keyword id="KW-0488">Methylation</keyword>
<keyword id="KW-0687">Ribonucleoprotein</keyword>
<keyword id="KW-0689">Ribosomal protein</keyword>
<keyword id="KW-0694">RNA-binding</keyword>
<keyword id="KW-0699">rRNA-binding</keyword>
<protein>
    <recommendedName>
        <fullName evidence="1">Large ribosomal subunit protein uL3</fullName>
    </recommendedName>
    <alternativeName>
        <fullName evidence="2">50S ribosomal protein L3</fullName>
    </alternativeName>
</protein>
<feature type="chain" id="PRO_0000353595" description="Large ribosomal subunit protein uL3">
    <location>
        <begin position="1"/>
        <end position="216"/>
    </location>
</feature>
<feature type="modified residue" description="N5-methylglutamine" evidence="1">
    <location>
        <position position="153"/>
    </location>
</feature>
<reference key="1">
    <citation type="submission" date="2008-04" db="EMBL/GenBank/DDBJ databases">
        <title>Complete sequence of chromosome 1 of Burkholderia ambifaria MC40-6.</title>
        <authorList>
            <person name="Copeland A."/>
            <person name="Lucas S."/>
            <person name="Lapidus A."/>
            <person name="Glavina del Rio T."/>
            <person name="Dalin E."/>
            <person name="Tice H."/>
            <person name="Pitluck S."/>
            <person name="Chain P."/>
            <person name="Malfatti S."/>
            <person name="Shin M."/>
            <person name="Vergez L."/>
            <person name="Lang D."/>
            <person name="Schmutz J."/>
            <person name="Larimer F."/>
            <person name="Land M."/>
            <person name="Hauser L."/>
            <person name="Kyrpides N."/>
            <person name="Lykidis A."/>
            <person name="Ramette A."/>
            <person name="Konstantinidis K."/>
            <person name="Tiedje J."/>
            <person name="Richardson P."/>
        </authorList>
    </citation>
    <scope>NUCLEOTIDE SEQUENCE [LARGE SCALE GENOMIC DNA]</scope>
    <source>
        <strain>MC40-6</strain>
    </source>
</reference>
<proteinExistence type="inferred from homology"/>
<evidence type="ECO:0000255" key="1">
    <source>
        <dbReference type="HAMAP-Rule" id="MF_01325"/>
    </source>
</evidence>
<evidence type="ECO:0000305" key="2"/>
<organism>
    <name type="scientific">Burkholderia ambifaria (strain MC40-6)</name>
    <dbReference type="NCBI Taxonomy" id="398577"/>
    <lineage>
        <taxon>Bacteria</taxon>
        <taxon>Pseudomonadati</taxon>
        <taxon>Pseudomonadota</taxon>
        <taxon>Betaproteobacteria</taxon>
        <taxon>Burkholderiales</taxon>
        <taxon>Burkholderiaceae</taxon>
        <taxon>Burkholderia</taxon>
        <taxon>Burkholderia cepacia complex</taxon>
    </lineage>
</organism>
<accession>B1YRD0</accession>
<comment type="function">
    <text evidence="1">One of the primary rRNA binding proteins, it binds directly near the 3'-end of the 23S rRNA, where it nucleates assembly of the 50S subunit.</text>
</comment>
<comment type="subunit">
    <text evidence="1">Part of the 50S ribosomal subunit. Forms a cluster with proteins L14 and L19.</text>
</comment>
<comment type="PTM">
    <text evidence="1">Methylated by PrmB.</text>
</comment>
<comment type="similarity">
    <text evidence="1">Belongs to the universal ribosomal protein uL3 family.</text>
</comment>
<dbReference type="EMBL" id="CP001025">
    <property type="protein sequence ID" value="ACB62777.1"/>
    <property type="molecule type" value="Genomic_DNA"/>
</dbReference>
<dbReference type="RefSeq" id="WP_006752926.1">
    <property type="nucleotide sequence ID" value="NC_010551.1"/>
</dbReference>
<dbReference type="SMR" id="B1YRD0"/>
<dbReference type="GeneID" id="98107160"/>
<dbReference type="KEGG" id="bac:BamMC406_0276"/>
<dbReference type="HOGENOM" id="CLU_044142_4_1_4"/>
<dbReference type="OrthoDB" id="9806135at2"/>
<dbReference type="Proteomes" id="UP000001680">
    <property type="component" value="Chromosome 1"/>
</dbReference>
<dbReference type="GO" id="GO:0022625">
    <property type="term" value="C:cytosolic large ribosomal subunit"/>
    <property type="evidence" value="ECO:0007669"/>
    <property type="project" value="TreeGrafter"/>
</dbReference>
<dbReference type="GO" id="GO:0019843">
    <property type="term" value="F:rRNA binding"/>
    <property type="evidence" value="ECO:0007669"/>
    <property type="project" value="UniProtKB-UniRule"/>
</dbReference>
<dbReference type="GO" id="GO:0003735">
    <property type="term" value="F:structural constituent of ribosome"/>
    <property type="evidence" value="ECO:0007669"/>
    <property type="project" value="InterPro"/>
</dbReference>
<dbReference type="GO" id="GO:0006412">
    <property type="term" value="P:translation"/>
    <property type="evidence" value="ECO:0007669"/>
    <property type="project" value="UniProtKB-UniRule"/>
</dbReference>
<dbReference type="FunFam" id="2.40.30.10:FF:000004">
    <property type="entry name" value="50S ribosomal protein L3"/>
    <property type="match status" value="1"/>
</dbReference>
<dbReference type="FunFam" id="3.30.160.810:FF:000001">
    <property type="entry name" value="50S ribosomal protein L3"/>
    <property type="match status" value="1"/>
</dbReference>
<dbReference type="Gene3D" id="3.30.160.810">
    <property type="match status" value="1"/>
</dbReference>
<dbReference type="Gene3D" id="2.40.30.10">
    <property type="entry name" value="Translation factors"/>
    <property type="match status" value="1"/>
</dbReference>
<dbReference type="HAMAP" id="MF_01325_B">
    <property type="entry name" value="Ribosomal_uL3_B"/>
    <property type="match status" value="1"/>
</dbReference>
<dbReference type="InterPro" id="IPR000597">
    <property type="entry name" value="Ribosomal_uL3"/>
</dbReference>
<dbReference type="InterPro" id="IPR019927">
    <property type="entry name" value="Ribosomal_uL3_bac/org-type"/>
</dbReference>
<dbReference type="InterPro" id="IPR019926">
    <property type="entry name" value="Ribosomal_uL3_CS"/>
</dbReference>
<dbReference type="InterPro" id="IPR009000">
    <property type="entry name" value="Transl_B-barrel_sf"/>
</dbReference>
<dbReference type="NCBIfam" id="TIGR03625">
    <property type="entry name" value="L3_bact"/>
    <property type="match status" value="1"/>
</dbReference>
<dbReference type="PANTHER" id="PTHR11229">
    <property type="entry name" value="50S RIBOSOMAL PROTEIN L3"/>
    <property type="match status" value="1"/>
</dbReference>
<dbReference type="PANTHER" id="PTHR11229:SF16">
    <property type="entry name" value="LARGE RIBOSOMAL SUBUNIT PROTEIN UL3C"/>
    <property type="match status" value="1"/>
</dbReference>
<dbReference type="Pfam" id="PF00297">
    <property type="entry name" value="Ribosomal_L3"/>
    <property type="match status" value="1"/>
</dbReference>
<dbReference type="SUPFAM" id="SSF50447">
    <property type="entry name" value="Translation proteins"/>
    <property type="match status" value="1"/>
</dbReference>
<dbReference type="PROSITE" id="PS00474">
    <property type="entry name" value="RIBOSOMAL_L3"/>
    <property type="match status" value="1"/>
</dbReference>
<sequence>MSLGLVGRKVGMTRIFTAEGDSIPVTVLDVSDNRVTQIKTVETDGYTAVQVAFGSRRASRVTKPLAGHLAKAGVEAGEILKEFRIDAAKAAELSNGAVVGADLFEVGQKVDVQGVSIGKGYAGTIKRYNFSSGRATHGNSRSHNVPGSIGMAQDPGRVFPGKRMTGHLGDVTVTVQNLEIARIDAERKLLLVKGAIPGAKGGKVFVTPAVKTKGAK</sequence>